<sequence length="364" mass="41220">MQERHTEQDYRALLIADTPIIDVRAPIEFEQGAMPAAINLPLMNNDERAAVGTCYKQQGSDAALALGHKLVAGEIRQQRMDAWRAACLQNPQGILCCARGGQRSHIVQRWLHEAGIDYPLVDGGYKALRQTAIQATIELSQKPIVLIGGCTGSGKTLLVQQQPNGVDLEGLARHRGSAFGRTLQPQLSQASFENLLAAEMLKTDARQELRLWVLEDESRMIGSNHLPECLRERMTQAAIAVVEDPFEIRLERLNEEYFLRMHHDFTHAYGDEQGWQEYCEYLHHGLSAIKRRLGLQRYNELAAQLDTALTTQLTTGSTDGHLAWLVPLLEEYYDPMYRYQLEKKAEKVVFRGEWAEVAEWVKAQ</sequence>
<evidence type="ECO:0000255" key="1">
    <source>
        <dbReference type="HAMAP-Rule" id="MF_01622"/>
    </source>
</evidence>
<keyword id="KW-0711">Selenium</keyword>
<keyword id="KW-0808">Transferase</keyword>
<organism>
    <name type="scientific">Escherichia coli O17:K52:H18 (strain UMN026 / ExPEC)</name>
    <dbReference type="NCBI Taxonomy" id="585056"/>
    <lineage>
        <taxon>Bacteria</taxon>
        <taxon>Pseudomonadati</taxon>
        <taxon>Pseudomonadota</taxon>
        <taxon>Gammaproteobacteria</taxon>
        <taxon>Enterobacterales</taxon>
        <taxon>Enterobacteriaceae</taxon>
        <taxon>Escherichia</taxon>
    </lineage>
</organism>
<accession>B7N958</accession>
<dbReference type="EC" id="2.9.1.3" evidence="1"/>
<dbReference type="EMBL" id="CU928163">
    <property type="protein sequence ID" value="CAR11759.1"/>
    <property type="molecule type" value="Genomic_DNA"/>
</dbReference>
<dbReference type="RefSeq" id="YP_002411307.1">
    <property type="nucleotide sequence ID" value="NC_011751.1"/>
</dbReference>
<dbReference type="SMR" id="B7N958"/>
<dbReference type="STRING" id="585056.ECUMN_0544"/>
<dbReference type="KEGG" id="eum:ECUMN_0544"/>
<dbReference type="PATRIC" id="fig|585056.7.peg.752"/>
<dbReference type="HOGENOM" id="CLU_043456_1_0_6"/>
<dbReference type="Proteomes" id="UP000007097">
    <property type="component" value="Chromosome"/>
</dbReference>
<dbReference type="GO" id="GO:0016765">
    <property type="term" value="F:transferase activity, transferring alkyl or aryl (other than methyl) groups"/>
    <property type="evidence" value="ECO:0007669"/>
    <property type="project" value="UniProtKB-UniRule"/>
</dbReference>
<dbReference type="GO" id="GO:0043828">
    <property type="term" value="F:tRNA 2-selenouridine synthase activity"/>
    <property type="evidence" value="ECO:0007669"/>
    <property type="project" value="UniProtKB-EC"/>
</dbReference>
<dbReference type="GO" id="GO:0002098">
    <property type="term" value="P:tRNA wobble uridine modification"/>
    <property type="evidence" value="ECO:0007669"/>
    <property type="project" value="UniProtKB-UniRule"/>
</dbReference>
<dbReference type="CDD" id="cd01520">
    <property type="entry name" value="RHOD_YbbB"/>
    <property type="match status" value="1"/>
</dbReference>
<dbReference type="FunFam" id="3.40.250.10:FF:000009">
    <property type="entry name" value="tRNA 2-selenouridine/geranyl-2-thiouridine synthase"/>
    <property type="match status" value="1"/>
</dbReference>
<dbReference type="Gene3D" id="3.40.250.10">
    <property type="entry name" value="Rhodanese-like domain"/>
    <property type="match status" value="1"/>
</dbReference>
<dbReference type="HAMAP" id="MF_01622">
    <property type="entry name" value="tRNA_sel_U_synth"/>
    <property type="match status" value="1"/>
</dbReference>
<dbReference type="InterPro" id="IPR001763">
    <property type="entry name" value="Rhodanese-like_dom"/>
</dbReference>
<dbReference type="InterPro" id="IPR036873">
    <property type="entry name" value="Rhodanese-like_dom_sf"/>
</dbReference>
<dbReference type="InterPro" id="IPR017582">
    <property type="entry name" value="SelU"/>
</dbReference>
<dbReference type="NCBIfam" id="NF008749">
    <property type="entry name" value="PRK11784.1-1"/>
    <property type="match status" value="1"/>
</dbReference>
<dbReference type="NCBIfam" id="NF008751">
    <property type="entry name" value="PRK11784.1-3"/>
    <property type="match status" value="1"/>
</dbReference>
<dbReference type="NCBIfam" id="TIGR03167">
    <property type="entry name" value="tRNA_sel_U_synt"/>
    <property type="match status" value="1"/>
</dbReference>
<dbReference type="PANTHER" id="PTHR30401">
    <property type="entry name" value="TRNA 2-SELENOURIDINE SYNTHASE"/>
    <property type="match status" value="1"/>
</dbReference>
<dbReference type="PANTHER" id="PTHR30401:SF0">
    <property type="entry name" value="TRNA 2-SELENOURIDINE SYNTHASE"/>
    <property type="match status" value="1"/>
</dbReference>
<dbReference type="Pfam" id="PF00581">
    <property type="entry name" value="Rhodanese"/>
    <property type="match status" value="1"/>
</dbReference>
<dbReference type="SMART" id="SM00450">
    <property type="entry name" value="RHOD"/>
    <property type="match status" value="1"/>
</dbReference>
<dbReference type="SUPFAM" id="SSF52821">
    <property type="entry name" value="Rhodanese/Cell cycle control phosphatase"/>
    <property type="match status" value="1"/>
</dbReference>
<dbReference type="PROSITE" id="PS50206">
    <property type="entry name" value="RHODANESE_3"/>
    <property type="match status" value="1"/>
</dbReference>
<comment type="function">
    <text evidence="1">Involved in the post-transcriptional modification of the uridine at the wobble position (U34) of tRNA(Lys), tRNA(Glu) and tRNA(Gln). Catalyzes the conversion of 2-thiouridine (S2U-RNA) to 2-selenouridine (Se2U-RNA). Acts in a two-step process involving geranylation of 2-thiouridine (S2U) to S-geranyl-2-thiouridine (geS2U) and subsequent selenation of the latter derivative to 2-selenouridine (Se2U) in the tRNA chain.</text>
</comment>
<comment type="catalytic activity">
    <reaction evidence="1">
        <text>5-methylaminomethyl-2-thiouridine(34) in tRNA + selenophosphate + (2E)-geranyl diphosphate + H2O + H(+) = 5-methylaminomethyl-2-selenouridine(34) in tRNA + (2E)-thiogeraniol + phosphate + diphosphate</text>
        <dbReference type="Rhea" id="RHEA:42716"/>
        <dbReference type="Rhea" id="RHEA-COMP:10195"/>
        <dbReference type="Rhea" id="RHEA-COMP:10196"/>
        <dbReference type="ChEBI" id="CHEBI:15377"/>
        <dbReference type="ChEBI" id="CHEBI:15378"/>
        <dbReference type="ChEBI" id="CHEBI:16144"/>
        <dbReference type="ChEBI" id="CHEBI:33019"/>
        <dbReference type="ChEBI" id="CHEBI:43474"/>
        <dbReference type="ChEBI" id="CHEBI:58057"/>
        <dbReference type="ChEBI" id="CHEBI:74455"/>
        <dbReference type="ChEBI" id="CHEBI:82743"/>
        <dbReference type="ChEBI" id="CHEBI:143703"/>
        <dbReference type="EC" id="2.9.1.3"/>
    </reaction>
    <physiologicalReaction direction="left-to-right" evidence="1">
        <dbReference type="Rhea" id="RHEA:42717"/>
    </physiologicalReaction>
</comment>
<comment type="catalytic activity">
    <reaction evidence="1">
        <text>5-methylaminomethyl-2-thiouridine(34) in tRNA + (2E)-geranyl diphosphate = 5-methylaminomethyl-S-(2E)-geranyl-thiouridine(34) in tRNA + diphosphate</text>
        <dbReference type="Rhea" id="RHEA:14085"/>
        <dbReference type="Rhea" id="RHEA-COMP:10195"/>
        <dbReference type="Rhea" id="RHEA-COMP:14654"/>
        <dbReference type="ChEBI" id="CHEBI:33019"/>
        <dbReference type="ChEBI" id="CHEBI:58057"/>
        <dbReference type="ChEBI" id="CHEBI:74455"/>
        <dbReference type="ChEBI" id="CHEBI:140632"/>
    </reaction>
    <physiologicalReaction direction="left-to-right" evidence="1">
        <dbReference type="Rhea" id="RHEA:14086"/>
    </physiologicalReaction>
</comment>
<comment type="catalytic activity">
    <reaction evidence="1">
        <text>5-methylaminomethyl-S-(2E)-geranyl-thiouridine(34) in tRNA + selenophosphate + H(+) = 5-methylaminomethyl-2-(Se-phospho)selenouridine(34) in tRNA + (2E)-thiogeraniol</text>
        <dbReference type="Rhea" id="RHEA:60172"/>
        <dbReference type="Rhea" id="RHEA-COMP:14654"/>
        <dbReference type="Rhea" id="RHEA-COMP:15523"/>
        <dbReference type="ChEBI" id="CHEBI:15378"/>
        <dbReference type="ChEBI" id="CHEBI:16144"/>
        <dbReference type="ChEBI" id="CHEBI:140632"/>
        <dbReference type="ChEBI" id="CHEBI:143702"/>
        <dbReference type="ChEBI" id="CHEBI:143703"/>
    </reaction>
    <physiologicalReaction direction="left-to-right" evidence="1">
        <dbReference type="Rhea" id="RHEA:60173"/>
    </physiologicalReaction>
</comment>
<comment type="catalytic activity">
    <reaction evidence="1">
        <text>5-methylaminomethyl-2-(Se-phospho)selenouridine(34) in tRNA + H2O = 5-methylaminomethyl-2-selenouridine(34) in tRNA + phosphate</text>
        <dbReference type="Rhea" id="RHEA:60176"/>
        <dbReference type="Rhea" id="RHEA-COMP:10196"/>
        <dbReference type="Rhea" id="RHEA-COMP:15523"/>
        <dbReference type="ChEBI" id="CHEBI:15377"/>
        <dbReference type="ChEBI" id="CHEBI:43474"/>
        <dbReference type="ChEBI" id="CHEBI:82743"/>
        <dbReference type="ChEBI" id="CHEBI:143702"/>
    </reaction>
    <physiologicalReaction direction="left-to-right" evidence="1">
        <dbReference type="Rhea" id="RHEA:60177"/>
    </physiologicalReaction>
</comment>
<comment type="subunit">
    <text evidence="1">Monomer.</text>
</comment>
<comment type="similarity">
    <text evidence="1">Belongs to the SelU family.</text>
</comment>
<proteinExistence type="inferred from homology"/>
<protein>
    <recommendedName>
        <fullName evidence="1">tRNA 2-selenouridine synthase</fullName>
        <ecNumber evidence="1">2.9.1.3</ecNumber>
    </recommendedName>
</protein>
<gene>
    <name evidence="1" type="primary">selU</name>
    <name type="ordered locus">ECUMN_0544</name>
</gene>
<name>SELU_ECOLU</name>
<reference key="1">
    <citation type="journal article" date="2009" name="PLoS Genet.">
        <title>Organised genome dynamics in the Escherichia coli species results in highly diverse adaptive paths.</title>
        <authorList>
            <person name="Touchon M."/>
            <person name="Hoede C."/>
            <person name="Tenaillon O."/>
            <person name="Barbe V."/>
            <person name="Baeriswyl S."/>
            <person name="Bidet P."/>
            <person name="Bingen E."/>
            <person name="Bonacorsi S."/>
            <person name="Bouchier C."/>
            <person name="Bouvet O."/>
            <person name="Calteau A."/>
            <person name="Chiapello H."/>
            <person name="Clermont O."/>
            <person name="Cruveiller S."/>
            <person name="Danchin A."/>
            <person name="Diard M."/>
            <person name="Dossat C."/>
            <person name="Karoui M.E."/>
            <person name="Frapy E."/>
            <person name="Garry L."/>
            <person name="Ghigo J.M."/>
            <person name="Gilles A.M."/>
            <person name="Johnson J."/>
            <person name="Le Bouguenec C."/>
            <person name="Lescat M."/>
            <person name="Mangenot S."/>
            <person name="Martinez-Jehanne V."/>
            <person name="Matic I."/>
            <person name="Nassif X."/>
            <person name="Oztas S."/>
            <person name="Petit M.A."/>
            <person name="Pichon C."/>
            <person name="Rouy Z."/>
            <person name="Ruf C.S."/>
            <person name="Schneider D."/>
            <person name="Tourret J."/>
            <person name="Vacherie B."/>
            <person name="Vallenet D."/>
            <person name="Medigue C."/>
            <person name="Rocha E.P.C."/>
            <person name="Denamur E."/>
        </authorList>
    </citation>
    <scope>NUCLEOTIDE SEQUENCE [LARGE SCALE GENOMIC DNA]</scope>
    <source>
        <strain>UMN026 / ExPEC</strain>
    </source>
</reference>
<feature type="chain" id="PRO_1000186072" description="tRNA 2-selenouridine synthase">
    <location>
        <begin position="1"/>
        <end position="364"/>
    </location>
</feature>
<feature type="domain" description="Rhodanese" evidence="1">
    <location>
        <begin position="14"/>
        <end position="137"/>
    </location>
</feature>
<feature type="active site" description="S-selanylcysteine intermediate" evidence="1">
    <location>
        <position position="97"/>
    </location>
</feature>